<sequence>MTKRTSAKYKIDRRMGENIWGRPKSPVNRREYGPGQHGQRRKQKMSDFGLQLRAKQKLKGYYGDLTEKQFRRIYAEAERVKGDTGENLIGLLERRLDAVVYRAKFVPTVFAARQFVNHGHVLVNGERVNIPSYRVKEGDVIEVREKSRQMAALLEATQLPERDVPDYVDADHNKMKATFVRTPGLADVPYPVMMEPNLVIEYYAQN</sequence>
<evidence type="ECO:0000255" key="1">
    <source>
        <dbReference type="HAMAP-Rule" id="MF_01306"/>
    </source>
</evidence>
<evidence type="ECO:0000256" key="2">
    <source>
        <dbReference type="SAM" id="MobiDB-lite"/>
    </source>
</evidence>
<evidence type="ECO:0000305" key="3"/>
<reference key="1">
    <citation type="journal article" date="2010" name="ISME J.">
        <title>The complete genome sequence of the algal symbiont Dinoroseobacter shibae: a hitchhiker's guide to life in the sea.</title>
        <authorList>
            <person name="Wagner-Dobler I."/>
            <person name="Ballhausen B."/>
            <person name="Berger M."/>
            <person name="Brinkhoff T."/>
            <person name="Buchholz I."/>
            <person name="Bunk B."/>
            <person name="Cypionka H."/>
            <person name="Daniel R."/>
            <person name="Drepper T."/>
            <person name="Gerdts G."/>
            <person name="Hahnke S."/>
            <person name="Han C."/>
            <person name="Jahn D."/>
            <person name="Kalhoefer D."/>
            <person name="Kiss H."/>
            <person name="Klenk H.P."/>
            <person name="Kyrpides N."/>
            <person name="Liebl W."/>
            <person name="Liesegang H."/>
            <person name="Meincke L."/>
            <person name="Pati A."/>
            <person name="Petersen J."/>
            <person name="Piekarski T."/>
            <person name="Pommerenke C."/>
            <person name="Pradella S."/>
            <person name="Pukall R."/>
            <person name="Rabus R."/>
            <person name="Stackebrandt E."/>
            <person name="Thole S."/>
            <person name="Thompson L."/>
            <person name="Tielen P."/>
            <person name="Tomasch J."/>
            <person name="von Jan M."/>
            <person name="Wanphrut N."/>
            <person name="Wichels A."/>
            <person name="Zech H."/>
            <person name="Simon M."/>
        </authorList>
    </citation>
    <scope>NUCLEOTIDE SEQUENCE [LARGE SCALE GENOMIC DNA]</scope>
    <source>
        <strain>DSM 16493 / NCIMB 14021 / DFL 12</strain>
    </source>
</reference>
<proteinExistence type="inferred from homology"/>
<feature type="chain" id="PRO_1000085971" description="Small ribosomal subunit protein uS4">
    <location>
        <begin position="1"/>
        <end position="206"/>
    </location>
</feature>
<feature type="domain" description="S4 RNA-binding" evidence="1">
    <location>
        <begin position="94"/>
        <end position="154"/>
    </location>
</feature>
<feature type="region of interest" description="Disordered" evidence="2">
    <location>
        <begin position="18"/>
        <end position="46"/>
    </location>
</feature>
<protein>
    <recommendedName>
        <fullName evidence="1">Small ribosomal subunit protein uS4</fullName>
    </recommendedName>
    <alternativeName>
        <fullName evidence="3">30S ribosomal protein S4</fullName>
    </alternativeName>
</protein>
<keyword id="KW-1185">Reference proteome</keyword>
<keyword id="KW-0687">Ribonucleoprotein</keyword>
<keyword id="KW-0689">Ribosomal protein</keyword>
<keyword id="KW-0694">RNA-binding</keyword>
<keyword id="KW-0699">rRNA-binding</keyword>
<organism>
    <name type="scientific">Dinoroseobacter shibae (strain DSM 16493 / NCIMB 14021 / DFL 12)</name>
    <dbReference type="NCBI Taxonomy" id="398580"/>
    <lineage>
        <taxon>Bacteria</taxon>
        <taxon>Pseudomonadati</taxon>
        <taxon>Pseudomonadota</taxon>
        <taxon>Alphaproteobacteria</taxon>
        <taxon>Rhodobacterales</taxon>
        <taxon>Roseobacteraceae</taxon>
        <taxon>Dinoroseobacter</taxon>
    </lineage>
</organism>
<accession>A8LK98</accession>
<comment type="function">
    <text evidence="1">One of the primary rRNA binding proteins, it binds directly to 16S rRNA where it nucleates assembly of the body of the 30S subunit.</text>
</comment>
<comment type="function">
    <text evidence="1">With S5 and S12 plays an important role in translational accuracy.</text>
</comment>
<comment type="subunit">
    <text evidence="1">Part of the 30S ribosomal subunit. Contacts protein S5. The interaction surface between S4 and S5 is involved in control of translational fidelity.</text>
</comment>
<comment type="similarity">
    <text evidence="1">Belongs to the universal ribosomal protein uS4 family.</text>
</comment>
<dbReference type="EMBL" id="CP000830">
    <property type="protein sequence ID" value="ABV94681.1"/>
    <property type="molecule type" value="Genomic_DNA"/>
</dbReference>
<dbReference type="RefSeq" id="WP_012179609.1">
    <property type="nucleotide sequence ID" value="NC_009952.1"/>
</dbReference>
<dbReference type="SMR" id="A8LK98"/>
<dbReference type="STRING" id="398580.Dshi_2948"/>
<dbReference type="KEGG" id="dsh:Dshi_2948"/>
<dbReference type="eggNOG" id="COG0522">
    <property type="taxonomic scope" value="Bacteria"/>
</dbReference>
<dbReference type="HOGENOM" id="CLU_092403_0_0_5"/>
<dbReference type="OrthoDB" id="9803672at2"/>
<dbReference type="Proteomes" id="UP000006833">
    <property type="component" value="Chromosome"/>
</dbReference>
<dbReference type="GO" id="GO:0015935">
    <property type="term" value="C:small ribosomal subunit"/>
    <property type="evidence" value="ECO:0007669"/>
    <property type="project" value="InterPro"/>
</dbReference>
<dbReference type="GO" id="GO:0019843">
    <property type="term" value="F:rRNA binding"/>
    <property type="evidence" value="ECO:0007669"/>
    <property type="project" value="UniProtKB-UniRule"/>
</dbReference>
<dbReference type="GO" id="GO:0003735">
    <property type="term" value="F:structural constituent of ribosome"/>
    <property type="evidence" value="ECO:0007669"/>
    <property type="project" value="InterPro"/>
</dbReference>
<dbReference type="GO" id="GO:0042274">
    <property type="term" value="P:ribosomal small subunit biogenesis"/>
    <property type="evidence" value="ECO:0007669"/>
    <property type="project" value="TreeGrafter"/>
</dbReference>
<dbReference type="GO" id="GO:0006412">
    <property type="term" value="P:translation"/>
    <property type="evidence" value="ECO:0007669"/>
    <property type="project" value="UniProtKB-UniRule"/>
</dbReference>
<dbReference type="CDD" id="cd00165">
    <property type="entry name" value="S4"/>
    <property type="match status" value="1"/>
</dbReference>
<dbReference type="FunFam" id="3.10.290.10:FF:000001">
    <property type="entry name" value="30S ribosomal protein S4"/>
    <property type="match status" value="1"/>
</dbReference>
<dbReference type="Gene3D" id="1.10.1050.10">
    <property type="entry name" value="Ribosomal Protein S4 Delta 41, Chain A, domain 1"/>
    <property type="match status" value="1"/>
</dbReference>
<dbReference type="Gene3D" id="3.10.290.10">
    <property type="entry name" value="RNA-binding S4 domain"/>
    <property type="match status" value="1"/>
</dbReference>
<dbReference type="HAMAP" id="MF_01306_B">
    <property type="entry name" value="Ribosomal_uS4_B"/>
    <property type="match status" value="1"/>
</dbReference>
<dbReference type="InterPro" id="IPR022801">
    <property type="entry name" value="Ribosomal_uS4"/>
</dbReference>
<dbReference type="InterPro" id="IPR005709">
    <property type="entry name" value="Ribosomal_uS4_bac-type"/>
</dbReference>
<dbReference type="InterPro" id="IPR018079">
    <property type="entry name" value="Ribosomal_uS4_CS"/>
</dbReference>
<dbReference type="InterPro" id="IPR001912">
    <property type="entry name" value="Ribosomal_uS4_N"/>
</dbReference>
<dbReference type="InterPro" id="IPR002942">
    <property type="entry name" value="S4_RNA-bd"/>
</dbReference>
<dbReference type="InterPro" id="IPR036986">
    <property type="entry name" value="S4_RNA-bd_sf"/>
</dbReference>
<dbReference type="NCBIfam" id="NF003717">
    <property type="entry name" value="PRK05327.1"/>
    <property type="match status" value="1"/>
</dbReference>
<dbReference type="NCBIfam" id="TIGR01017">
    <property type="entry name" value="rpsD_bact"/>
    <property type="match status" value="1"/>
</dbReference>
<dbReference type="PANTHER" id="PTHR11831">
    <property type="entry name" value="30S 40S RIBOSOMAL PROTEIN"/>
    <property type="match status" value="1"/>
</dbReference>
<dbReference type="PANTHER" id="PTHR11831:SF4">
    <property type="entry name" value="SMALL RIBOSOMAL SUBUNIT PROTEIN US4M"/>
    <property type="match status" value="1"/>
</dbReference>
<dbReference type="Pfam" id="PF00163">
    <property type="entry name" value="Ribosomal_S4"/>
    <property type="match status" value="1"/>
</dbReference>
<dbReference type="Pfam" id="PF01479">
    <property type="entry name" value="S4"/>
    <property type="match status" value="1"/>
</dbReference>
<dbReference type="SMART" id="SM01390">
    <property type="entry name" value="Ribosomal_S4"/>
    <property type="match status" value="1"/>
</dbReference>
<dbReference type="SMART" id="SM00363">
    <property type="entry name" value="S4"/>
    <property type="match status" value="1"/>
</dbReference>
<dbReference type="SUPFAM" id="SSF55174">
    <property type="entry name" value="Alpha-L RNA-binding motif"/>
    <property type="match status" value="1"/>
</dbReference>
<dbReference type="PROSITE" id="PS00632">
    <property type="entry name" value="RIBOSOMAL_S4"/>
    <property type="match status" value="1"/>
</dbReference>
<dbReference type="PROSITE" id="PS50889">
    <property type="entry name" value="S4"/>
    <property type="match status" value="1"/>
</dbReference>
<gene>
    <name evidence="1" type="primary">rpsD</name>
    <name type="ordered locus">Dshi_2948</name>
</gene>
<name>RS4_DINSH</name>